<accession>Q6HPS0</accession>
<dbReference type="EMBL" id="AE017355">
    <property type="protein sequence ID" value="AAT61493.1"/>
    <property type="molecule type" value="Genomic_DNA"/>
</dbReference>
<dbReference type="RefSeq" id="WP_002020168.1">
    <property type="nucleotide sequence ID" value="NC_005957.1"/>
</dbReference>
<dbReference type="RefSeq" id="YP_034450.1">
    <property type="nucleotide sequence ID" value="NC_005957.1"/>
</dbReference>
<dbReference type="SMR" id="Q6HPS0"/>
<dbReference type="GeneID" id="93010955"/>
<dbReference type="KEGG" id="btk:BT9727_0094"/>
<dbReference type="PATRIC" id="fig|281309.8.peg.95"/>
<dbReference type="HOGENOM" id="CLU_062853_0_0_9"/>
<dbReference type="Proteomes" id="UP000001301">
    <property type="component" value="Chromosome"/>
</dbReference>
<dbReference type="GO" id="GO:0015934">
    <property type="term" value="C:large ribosomal subunit"/>
    <property type="evidence" value="ECO:0007669"/>
    <property type="project" value="InterPro"/>
</dbReference>
<dbReference type="GO" id="GO:0019843">
    <property type="term" value="F:rRNA binding"/>
    <property type="evidence" value="ECO:0007669"/>
    <property type="project" value="UniProtKB-UniRule"/>
</dbReference>
<dbReference type="GO" id="GO:0003735">
    <property type="term" value="F:structural constituent of ribosome"/>
    <property type="evidence" value="ECO:0007669"/>
    <property type="project" value="InterPro"/>
</dbReference>
<dbReference type="GO" id="GO:0000049">
    <property type="term" value="F:tRNA binding"/>
    <property type="evidence" value="ECO:0007669"/>
    <property type="project" value="UniProtKB-KW"/>
</dbReference>
<dbReference type="GO" id="GO:0006417">
    <property type="term" value="P:regulation of translation"/>
    <property type="evidence" value="ECO:0007669"/>
    <property type="project" value="UniProtKB-KW"/>
</dbReference>
<dbReference type="GO" id="GO:0006412">
    <property type="term" value="P:translation"/>
    <property type="evidence" value="ECO:0007669"/>
    <property type="project" value="UniProtKB-UniRule"/>
</dbReference>
<dbReference type="CDD" id="cd00403">
    <property type="entry name" value="Ribosomal_L1"/>
    <property type="match status" value="1"/>
</dbReference>
<dbReference type="FunFam" id="3.40.50.790:FF:000001">
    <property type="entry name" value="50S ribosomal protein L1"/>
    <property type="match status" value="1"/>
</dbReference>
<dbReference type="Gene3D" id="3.30.190.20">
    <property type="match status" value="1"/>
</dbReference>
<dbReference type="Gene3D" id="3.40.50.790">
    <property type="match status" value="1"/>
</dbReference>
<dbReference type="HAMAP" id="MF_01318_B">
    <property type="entry name" value="Ribosomal_uL1_B"/>
    <property type="match status" value="1"/>
</dbReference>
<dbReference type="InterPro" id="IPR005878">
    <property type="entry name" value="Ribosom_uL1_bac-type"/>
</dbReference>
<dbReference type="InterPro" id="IPR002143">
    <property type="entry name" value="Ribosomal_uL1"/>
</dbReference>
<dbReference type="InterPro" id="IPR023674">
    <property type="entry name" value="Ribosomal_uL1-like"/>
</dbReference>
<dbReference type="InterPro" id="IPR028364">
    <property type="entry name" value="Ribosomal_uL1/biogenesis"/>
</dbReference>
<dbReference type="InterPro" id="IPR016095">
    <property type="entry name" value="Ribosomal_uL1_3-a/b-sand"/>
</dbReference>
<dbReference type="InterPro" id="IPR023673">
    <property type="entry name" value="Ribosomal_uL1_CS"/>
</dbReference>
<dbReference type="NCBIfam" id="TIGR01169">
    <property type="entry name" value="rplA_bact"/>
    <property type="match status" value="1"/>
</dbReference>
<dbReference type="PANTHER" id="PTHR36427">
    <property type="entry name" value="54S RIBOSOMAL PROTEIN L1, MITOCHONDRIAL"/>
    <property type="match status" value="1"/>
</dbReference>
<dbReference type="PANTHER" id="PTHR36427:SF3">
    <property type="entry name" value="LARGE RIBOSOMAL SUBUNIT PROTEIN UL1M"/>
    <property type="match status" value="1"/>
</dbReference>
<dbReference type="Pfam" id="PF00687">
    <property type="entry name" value="Ribosomal_L1"/>
    <property type="match status" value="1"/>
</dbReference>
<dbReference type="PIRSF" id="PIRSF002155">
    <property type="entry name" value="Ribosomal_L1"/>
    <property type="match status" value="1"/>
</dbReference>
<dbReference type="SUPFAM" id="SSF56808">
    <property type="entry name" value="Ribosomal protein L1"/>
    <property type="match status" value="1"/>
</dbReference>
<dbReference type="PROSITE" id="PS01199">
    <property type="entry name" value="RIBOSOMAL_L1"/>
    <property type="match status" value="1"/>
</dbReference>
<name>RL1_BACHK</name>
<gene>
    <name evidence="1" type="primary">rplA</name>
    <name type="ordered locus">BT9727_0094</name>
</gene>
<evidence type="ECO:0000255" key="1">
    <source>
        <dbReference type="HAMAP-Rule" id="MF_01318"/>
    </source>
</evidence>
<evidence type="ECO:0000305" key="2"/>
<feature type="chain" id="PRO_0000125613" description="Large ribosomal subunit protein uL1">
    <location>
        <begin position="1"/>
        <end position="230"/>
    </location>
</feature>
<sequence>MAKRGKKYVEAAKLVDRAAAYSATEAVELVKKTNTAKFDATVEAAFRLGVDPKKADQQIRGAVVLPHGTGKVQRVLVFAKGEKAKEAEAAGADFVGDADYIGKIQQGWFDFDVVVATPDMMGEVGKLGRVLGPKGLMPNPKTGTVTFDVTKAVNEIKAGKVEYRVDKAGNIHVPIGKVSFEDAKLVENFRTIADTLQKVKPAAAKGTYMKNVTVASTMGPGVRVDVSTLA</sequence>
<keyword id="KW-0678">Repressor</keyword>
<keyword id="KW-0687">Ribonucleoprotein</keyword>
<keyword id="KW-0689">Ribosomal protein</keyword>
<keyword id="KW-0694">RNA-binding</keyword>
<keyword id="KW-0699">rRNA-binding</keyword>
<keyword id="KW-0810">Translation regulation</keyword>
<keyword id="KW-0820">tRNA-binding</keyword>
<comment type="function">
    <text evidence="1">Binds directly to 23S rRNA. The L1 stalk is quite mobile in the ribosome, and is involved in E site tRNA release.</text>
</comment>
<comment type="function">
    <text evidence="1">Protein L1 is also a translational repressor protein, it controls the translation of the L11 operon by binding to its mRNA.</text>
</comment>
<comment type="subunit">
    <text evidence="1">Part of the 50S ribosomal subunit.</text>
</comment>
<comment type="similarity">
    <text evidence="1">Belongs to the universal ribosomal protein uL1 family.</text>
</comment>
<proteinExistence type="inferred from homology"/>
<reference key="1">
    <citation type="journal article" date="2006" name="J. Bacteriol.">
        <title>Pathogenomic sequence analysis of Bacillus cereus and Bacillus thuringiensis isolates closely related to Bacillus anthracis.</title>
        <authorList>
            <person name="Han C.S."/>
            <person name="Xie G."/>
            <person name="Challacombe J.F."/>
            <person name="Altherr M.R."/>
            <person name="Bhotika S.S."/>
            <person name="Bruce D."/>
            <person name="Campbell C.S."/>
            <person name="Campbell M.L."/>
            <person name="Chen J."/>
            <person name="Chertkov O."/>
            <person name="Cleland C."/>
            <person name="Dimitrijevic M."/>
            <person name="Doggett N.A."/>
            <person name="Fawcett J.J."/>
            <person name="Glavina T."/>
            <person name="Goodwin L.A."/>
            <person name="Hill K.K."/>
            <person name="Hitchcock P."/>
            <person name="Jackson P.J."/>
            <person name="Keim P."/>
            <person name="Kewalramani A.R."/>
            <person name="Longmire J."/>
            <person name="Lucas S."/>
            <person name="Malfatti S."/>
            <person name="McMurry K."/>
            <person name="Meincke L.J."/>
            <person name="Misra M."/>
            <person name="Moseman B.L."/>
            <person name="Mundt M."/>
            <person name="Munk A.C."/>
            <person name="Okinaka R.T."/>
            <person name="Parson-Quintana B."/>
            <person name="Reilly L.P."/>
            <person name="Richardson P."/>
            <person name="Robinson D.L."/>
            <person name="Rubin E."/>
            <person name="Saunders E."/>
            <person name="Tapia R."/>
            <person name="Tesmer J.G."/>
            <person name="Thayer N."/>
            <person name="Thompson L.S."/>
            <person name="Tice H."/>
            <person name="Ticknor L.O."/>
            <person name="Wills P.L."/>
            <person name="Brettin T.S."/>
            <person name="Gilna P."/>
        </authorList>
    </citation>
    <scope>NUCLEOTIDE SEQUENCE [LARGE SCALE GENOMIC DNA]</scope>
    <source>
        <strain>97-27</strain>
    </source>
</reference>
<protein>
    <recommendedName>
        <fullName evidence="1">Large ribosomal subunit protein uL1</fullName>
    </recommendedName>
    <alternativeName>
        <fullName evidence="2">50S ribosomal protein L1</fullName>
    </alternativeName>
</protein>
<organism>
    <name type="scientific">Bacillus thuringiensis subsp. konkukian (strain 97-27)</name>
    <dbReference type="NCBI Taxonomy" id="281309"/>
    <lineage>
        <taxon>Bacteria</taxon>
        <taxon>Bacillati</taxon>
        <taxon>Bacillota</taxon>
        <taxon>Bacilli</taxon>
        <taxon>Bacillales</taxon>
        <taxon>Bacillaceae</taxon>
        <taxon>Bacillus</taxon>
        <taxon>Bacillus cereus group</taxon>
    </lineage>
</organism>